<accession>P29408</accession>
<sequence length="417" mass="44978">MSLSKKLTLDKVDLKGKRVIMRVDFNVPMKNKEITNNQRIKAALPSINYCLDNGAKSVVLMSHLGRPDGVPMPDKYSLEPVAAELKSLLGKDVLFLKDCVGPEVEQACANPPNGSIILLENLRFHVEEEGKGKDASGNKIKAEPAKMEAFQASLSKLGDVYVNDAFGTAHRAHSSMVGVNLPQKACGFLMKKELTYFAKALDSPERPFLAILGGAKVADKIQLINNMLDKVNEMIIGGGMGFTFLKVLNNMEIGTSLFDEEGAKIVKDLMAKAEKNGVKITLPVDFVTADKFDENAKTGQATLASGIPAGWMGLDCGPKSSKKYVEVVTWAKQIVWNGPVGVFEWEEFARGTKELMNNVVEATKRGCITIIGGGDTATCCAKWNTEDKVSHVSTGGGASLELLEGKVLPGVSTLNNV</sequence>
<evidence type="ECO:0000250" key="1"/>
<evidence type="ECO:0000250" key="2">
    <source>
        <dbReference type="UniProtKB" id="P00558"/>
    </source>
</evidence>
<evidence type="ECO:0000250" key="3">
    <source>
        <dbReference type="UniProtKB" id="P09411"/>
    </source>
</evidence>
<evidence type="ECO:0000250" key="4">
    <source>
        <dbReference type="UniProtKB" id="Q7SIB7"/>
    </source>
</evidence>
<evidence type="ECO:0000305" key="5"/>
<name>PGK1_NOTEU</name>
<gene>
    <name type="primary">PGK1</name>
    <name type="synonym">PGK-1</name>
</gene>
<protein>
    <recommendedName>
        <fullName>Phosphoglycerate kinase 1</fullName>
        <ecNumber evidence="2">2.7.11.1</ecNumber>
        <ecNumber evidence="2">2.7.2.3</ecNumber>
    </recommendedName>
</protein>
<proteinExistence type="evidence at transcript level"/>
<reference key="1">
    <citation type="journal article" date="1992" name="Biochem. Biophys. Res. Commun.">
        <title>PCR derived cDNA clones for X-linked phosphoglycerate kinase-1 in a marsupial, the tammar wallaby (Macropus eugenii).</title>
        <authorList>
            <person name="Zehavi-Feferman T."/>
            <person name="Cooper D.W."/>
        </authorList>
    </citation>
    <scope>NUCLEOTIDE SEQUENCE [MRNA]</scope>
</reference>
<dbReference type="EC" id="2.7.11.1" evidence="2"/>
<dbReference type="EC" id="2.7.2.3" evidence="2"/>
<dbReference type="EMBL" id="X64296">
    <property type="protein sequence ID" value="CAA45574.1"/>
    <property type="molecule type" value="mRNA"/>
</dbReference>
<dbReference type="PIR" id="PC1118">
    <property type="entry name" value="PC1118"/>
</dbReference>
<dbReference type="SMR" id="P29408"/>
<dbReference type="UniPathway" id="UPA00109">
    <property type="reaction ID" value="UER00185"/>
</dbReference>
<dbReference type="GO" id="GO:0005829">
    <property type="term" value="C:cytosol"/>
    <property type="evidence" value="ECO:0000250"/>
    <property type="project" value="UniProtKB"/>
</dbReference>
<dbReference type="GO" id="GO:0005759">
    <property type="term" value="C:mitochondrial matrix"/>
    <property type="evidence" value="ECO:0000250"/>
    <property type="project" value="UniProtKB"/>
</dbReference>
<dbReference type="GO" id="GO:0043531">
    <property type="term" value="F:ADP binding"/>
    <property type="evidence" value="ECO:0007669"/>
    <property type="project" value="TreeGrafter"/>
</dbReference>
<dbReference type="GO" id="GO:0005524">
    <property type="term" value="F:ATP binding"/>
    <property type="evidence" value="ECO:0000250"/>
    <property type="project" value="UniProtKB"/>
</dbReference>
<dbReference type="GO" id="GO:0046872">
    <property type="term" value="F:metal ion binding"/>
    <property type="evidence" value="ECO:0007669"/>
    <property type="project" value="UniProtKB-KW"/>
</dbReference>
<dbReference type="GO" id="GO:0004618">
    <property type="term" value="F:phosphoglycerate kinase activity"/>
    <property type="evidence" value="ECO:0000250"/>
    <property type="project" value="UniProtKB"/>
</dbReference>
<dbReference type="GO" id="GO:0106310">
    <property type="term" value="F:protein serine kinase activity"/>
    <property type="evidence" value="ECO:0007669"/>
    <property type="project" value="RHEA"/>
</dbReference>
<dbReference type="GO" id="GO:0006094">
    <property type="term" value="P:gluconeogenesis"/>
    <property type="evidence" value="ECO:0007669"/>
    <property type="project" value="TreeGrafter"/>
</dbReference>
<dbReference type="GO" id="GO:0006096">
    <property type="term" value="P:glycolytic process"/>
    <property type="evidence" value="ECO:0007669"/>
    <property type="project" value="UniProtKB-UniPathway"/>
</dbReference>
<dbReference type="CDD" id="cd00318">
    <property type="entry name" value="Phosphoglycerate_kinase"/>
    <property type="match status" value="1"/>
</dbReference>
<dbReference type="FunFam" id="3.40.50.1260:FF:000019">
    <property type="entry name" value="Phosphoglycerate kinase 1"/>
    <property type="match status" value="1"/>
</dbReference>
<dbReference type="FunFam" id="3.40.50.1260:FF:000031">
    <property type="entry name" value="Phosphoglycerate kinase 1"/>
    <property type="match status" value="1"/>
</dbReference>
<dbReference type="Gene3D" id="3.40.50.1260">
    <property type="entry name" value="Phosphoglycerate kinase, N-terminal domain"/>
    <property type="match status" value="3"/>
</dbReference>
<dbReference type="HAMAP" id="MF_00145">
    <property type="entry name" value="Phosphoglyc_kinase"/>
    <property type="match status" value="1"/>
</dbReference>
<dbReference type="InterPro" id="IPR001576">
    <property type="entry name" value="Phosphoglycerate_kinase"/>
</dbReference>
<dbReference type="InterPro" id="IPR015911">
    <property type="entry name" value="Phosphoglycerate_kinase_CS"/>
</dbReference>
<dbReference type="InterPro" id="IPR015824">
    <property type="entry name" value="Phosphoglycerate_kinase_N"/>
</dbReference>
<dbReference type="InterPro" id="IPR036043">
    <property type="entry name" value="Phosphoglycerate_kinase_sf"/>
</dbReference>
<dbReference type="PANTHER" id="PTHR11406">
    <property type="entry name" value="PHOSPHOGLYCERATE KINASE"/>
    <property type="match status" value="1"/>
</dbReference>
<dbReference type="PANTHER" id="PTHR11406:SF0">
    <property type="entry name" value="PHOSPHOGLYCERATE KINASE"/>
    <property type="match status" value="1"/>
</dbReference>
<dbReference type="Pfam" id="PF00162">
    <property type="entry name" value="PGK"/>
    <property type="match status" value="1"/>
</dbReference>
<dbReference type="PIRSF" id="PIRSF000724">
    <property type="entry name" value="Pgk"/>
    <property type="match status" value="1"/>
</dbReference>
<dbReference type="PRINTS" id="PR00477">
    <property type="entry name" value="PHGLYCKINASE"/>
</dbReference>
<dbReference type="SUPFAM" id="SSF53748">
    <property type="entry name" value="Phosphoglycerate kinase"/>
    <property type="match status" value="1"/>
</dbReference>
<dbReference type="PROSITE" id="PS00111">
    <property type="entry name" value="PGLYCERATE_KINASE"/>
    <property type="match status" value="1"/>
</dbReference>
<comment type="function">
    <text evidence="2">Catalyzes one of the two ATP producing reactions in the glycolytic pathway via the reversible conversion of 1,3-diphosphoglycerate to 3-phosphoglycerate. Both L- and D- forms of purine and pyrimidine nucleotides can be used as substrates, but the activity is much lower on pyrimidines. In addition to its role as a glycolytic enzyme, it seems that PGK-1 acts as a polymerase alpha cofactor protein (primer recognition protein). Acts as a protein kinase when localized to the mitochondrion where it phosphorylates pyruvate dehydrogenase kinase PDK1 to inhibit pyruvate dehydrogenase complex activity and suppress the formation of acetyl-coenzyme A from pyruvate, and consequently inhibit oxidative phosphorylation and promote glycolysis. May play a role in sperm motility.</text>
</comment>
<comment type="catalytic activity">
    <reaction evidence="2">
        <text>(2R)-3-phosphoglycerate + ATP = (2R)-3-phospho-glyceroyl phosphate + ADP</text>
        <dbReference type="Rhea" id="RHEA:14801"/>
        <dbReference type="ChEBI" id="CHEBI:30616"/>
        <dbReference type="ChEBI" id="CHEBI:57604"/>
        <dbReference type="ChEBI" id="CHEBI:58272"/>
        <dbReference type="ChEBI" id="CHEBI:456216"/>
        <dbReference type="EC" id="2.7.2.3"/>
    </reaction>
</comment>
<comment type="catalytic activity">
    <reaction evidence="2">
        <text>L-seryl-[protein] + ATP = O-phospho-L-seryl-[protein] + ADP + H(+)</text>
        <dbReference type="Rhea" id="RHEA:17989"/>
        <dbReference type="Rhea" id="RHEA-COMP:9863"/>
        <dbReference type="Rhea" id="RHEA-COMP:11604"/>
        <dbReference type="ChEBI" id="CHEBI:15378"/>
        <dbReference type="ChEBI" id="CHEBI:29999"/>
        <dbReference type="ChEBI" id="CHEBI:30616"/>
        <dbReference type="ChEBI" id="CHEBI:83421"/>
        <dbReference type="ChEBI" id="CHEBI:456216"/>
        <dbReference type="EC" id="2.7.11.1"/>
    </reaction>
</comment>
<comment type="cofactor">
    <cofactor evidence="2">
        <name>Mg(2+)</name>
        <dbReference type="ChEBI" id="CHEBI:18420"/>
    </cofactor>
</comment>
<comment type="pathway">
    <text evidence="2">Carbohydrate degradation; glycolysis; pyruvate from D-glyceraldehyde 3-phosphate: step 2/5.</text>
</comment>
<comment type="subunit">
    <text evidence="2">Monomer. Interacts with kinase MAPK1/ERK2; the interaction is direct, occurs under hypoxic conditions, and promotes its interaction with PIN1. Interacts with peptidyl-prolyl cis-trans isomerase PIN1; the interaction is direct, occurs under hypoxic conditions, and targets the protein to the mitochondrion by promoting interactions with the TOM complex. Interacts with mitochondrial circRNA mcPGK1 (via its 2nd stem-loop); the interaction is direct and targets the protein to the mitochondrion by promoting interactions with the TOM complex. Interacts with pyruvate dehydrogenase kinase PDK1; the interaction is direct, occurs under hypoxic conditions and leads to PDK1-mediated inhibition of pyruvate dehydrogenase complex activity.</text>
</comment>
<comment type="subcellular location">
    <subcellularLocation>
        <location evidence="2">Cytoplasm</location>
        <location evidence="2">Cytosol</location>
    </subcellularLocation>
    <subcellularLocation>
        <location evidence="2">Mitochondrion matrix</location>
    </subcellularLocation>
    <text evidence="2">Hypoxic conditions promote mitochondrial targeting. Targeted to the mitochondrion following phosphorylation by MAPK1/ERK2, cis-trans isomerization by PIN1, and binding to mitochondrial circRNA mcPGK1.</text>
</comment>
<comment type="PTM">
    <text evidence="2">Phosphorylated at Ser-203 by MAPK1/ERK2 under hypoxic conditions, which promotes its mitochondrial targeting.</text>
</comment>
<comment type="similarity">
    <text evidence="5">Belongs to the phosphoglycerate kinase family.</text>
</comment>
<organism>
    <name type="scientific">Notamacropus eugenii</name>
    <name type="common">Tammar wallaby</name>
    <name type="synonym">Macropus eugenii</name>
    <dbReference type="NCBI Taxonomy" id="9315"/>
    <lineage>
        <taxon>Eukaryota</taxon>
        <taxon>Metazoa</taxon>
        <taxon>Chordata</taxon>
        <taxon>Craniata</taxon>
        <taxon>Vertebrata</taxon>
        <taxon>Euteleostomi</taxon>
        <taxon>Mammalia</taxon>
        <taxon>Metatheria</taxon>
        <taxon>Diprotodontia</taxon>
        <taxon>Macropodidae</taxon>
        <taxon>Notamacropus</taxon>
    </lineage>
</organism>
<feature type="initiator methionine" description="Removed" evidence="2">
    <location>
        <position position="1"/>
    </location>
</feature>
<feature type="chain" id="PRO_0000145833" description="Phosphoglycerate kinase 1">
    <location>
        <begin position="2"/>
        <end position="417"/>
    </location>
</feature>
<feature type="region of interest" description="Mitochondrial targeting region exposed following cis-trans isomerization by PIN1 and recognized by the TOM complex for mitochondrial translocation of the protein" evidence="2">
    <location>
        <begin position="38"/>
        <end position="43"/>
    </location>
</feature>
<feature type="binding site" evidence="2">
    <location>
        <position position="23"/>
    </location>
    <ligand>
        <name>(2R)-3-phosphoglycerate</name>
        <dbReference type="ChEBI" id="CHEBI:58272"/>
    </ligand>
</feature>
<feature type="binding site" evidence="4">
    <location>
        <position position="24"/>
    </location>
    <ligand>
        <name>(2R)-3-phosphoglycerate</name>
        <dbReference type="ChEBI" id="CHEBI:58272"/>
    </ligand>
</feature>
<feature type="binding site" evidence="2">
    <location>
        <position position="25"/>
    </location>
    <ligand>
        <name>(2R)-3-phosphoglycerate</name>
        <dbReference type="ChEBI" id="CHEBI:58272"/>
    </ligand>
</feature>
<feature type="binding site" evidence="4">
    <location>
        <position position="26"/>
    </location>
    <ligand>
        <name>(2R)-3-phosphoglycerate</name>
        <dbReference type="ChEBI" id="CHEBI:58272"/>
    </ligand>
</feature>
<feature type="binding site" evidence="2">
    <location>
        <position position="38"/>
    </location>
    <ligand>
        <name>(2R)-3-phosphoglycerate</name>
        <dbReference type="ChEBI" id="CHEBI:58272"/>
    </ligand>
</feature>
<feature type="binding site" evidence="4">
    <location>
        <position position="39"/>
    </location>
    <ligand>
        <name>(2R)-3-phosphoglycerate</name>
        <dbReference type="ChEBI" id="CHEBI:58272"/>
    </ligand>
</feature>
<feature type="binding site" evidence="2">
    <location>
        <position position="62"/>
    </location>
    <ligand>
        <name>(2R)-3-phosphoglycerate</name>
        <dbReference type="ChEBI" id="CHEBI:58272"/>
    </ligand>
</feature>
<feature type="binding site" evidence="4">
    <location>
        <position position="63"/>
    </location>
    <ligand>
        <name>(2R)-3-phosphoglycerate</name>
        <dbReference type="ChEBI" id="CHEBI:58272"/>
    </ligand>
</feature>
<feature type="binding site" evidence="2">
    <location>
        <position position="65"/>
    </location>
    <ligand>
        <name>(2R)-3-phosphoglycerate</name>
        <dbReference type="ChEBI" id="CHEBI:58272"/>
    </ligand>
</feature>
<feature type="binding site" evidence="4">
    <location>
        <position position="66"/>
    </location>
    <ligand>
        <name>(2R)-3-phosphoglycerate</name>
        <dbReference type="ChEBI" id="CHEBI:58272"/>
    </ligand>
</feature>
<feature type="binding site" evidence="2">
    <location>
        <position position="122"/>
    </location>
    <ligand>
        <name>(2R)-3-phosphoglycerate</name>
        <dbReference type="ChEBI" id="CHEBI:58272"/>
    </ligand>
</feature>
<feature type="binding site" evidence="4">
    <location>
        <position position="123"/>
    </location>
    <ligand>
        <name>(2R)-3-phosphoglycerate</name>
        <dbReference type="ChEBI" id="CHEBI:58272"/>
    </ligand>
</feature>
<feature type="binding site" evidence="2">
    <location>
        <position position="170"/>
    </location>
    <ligand>
        <name>(2R)-3-phosphoglycerate</name>
        <dbReference type="ChEBI" id="CHEBI:58272"/>
    </ligand>
</feature>
<feature type="binding site" evidence="4">
    <location>
        <position position="171"/>
    </location>
    <ligand>
        <name>(2R)-3-phosphoglycerate</name>
        <dbReference type="ChEBI" id="CHEBI:58272"/>
    </ligand>
</feature>
<feature type="binding site" evidence="2">
    <location>
        <position position="214"/>
    </location>
    <ligand>
        <name>ADP</name>
        <dbReference type="ChEBI" id="CHEBI:456216"/>
    </ligand>
</feature>
<feature type="binding site" evidence="2">
    <location>
        <position position="214"/>
    </location>
    <ligand>
        <name>CDP</name>
        <dbReference type="ChEBI" id="CHEBI:58069"/>
    </ligand>
</feature>
<feature type="binding site" evidence="4">
    <location>
        <position position="215"/>
    </location>
    <ligand>
        <name>AMP</name>
        <dbReference type="ChEBI" id="CHEBI:456215"/>
    </ligand>
</feature>
<feature type="binding site" evidence="4">
    <location>
        <position position="215"/>
    </location>
    <ligand>
        <name>ATP</name>
        <dbReference type="ChEBI" id="CHEBI:30616"/>
    </ligand>
</feature>
<feature type="binding site" evidence="2">
    <location>
        <position position="215"/>
    </location>
    <ligand>
        <name>Mg(2+)</name>
        <dbReference type="ChEBI" id="CHEBI:18420"/>
    </ligand>
</feature>
<feature type="binding site" evidence="4">
    <location>
        <position position="216"/>
    </location>
    <ligand>
        <name>AMP</name>
        <dbReference type="ChEBI" id="CHEBI:456215"/>
    </ligand>
</feature>
<feature type="binding site" evidence="2">
    <location>
        <position position="218"/>
    </location>
    <ligand>
        <name>Mg(2+)</name>
        <dbReference type="ChEBI" id="CHEBI:18420"/>
    </ligand>
</feature>
<feature type="binding site" evidence="2">
    <location>
        <position position="219"/>
    </location>
    <ligand>
        <name>CDP</name>
        <dbReference type="ChEBI" id="CHEBI:58069"/>
    </ligand>
</feature>
<feature type="binding site" evidence="2">
    <location>
        <position position="219"/>
    </location>
    <ligand>
        <name>Mg(2+)</name>
        <dbReference type="ChEBI" id="CHEBI:18420"/>
    </ligand>
</feature>
<feature type="binding site" evidence="4">
    <location>
        <position position="220"/>
    </location>
    <ligand>
        <name>AMP</name>
        <dbReference type="ChEBI" id="CHEBI:456215"/>
    </ligand>
</feature>
<feature type="binding site" evidence="4">
    <location>
        <position position="220"/>
    </location>
    <ligand>
        <name>ATP</name>
        <dbReference type="ChEBI" id="CHEBI:30616"/>
    </ligand>
</feature>
<feature type="binding site" evidence="2">
    <location>
        <position position="238"/>
    </location>
    <ligand>
        <name>ADP</name>
        <dbReference type="ChEBI" id="CHEBI:456216"/>
    </ligand>
</feature>
<feature type="binding site" evidence="2">
    <location>
        <position position="238"/>
    </location>
    <ligand>
        <name>CDP</name>
        <dbReference type="ChEBI" id="CHEBI:58069"/>
    </ligand>
</feature>
<feature type="binding site" evidence="4">
    <location>
        <position position="239"/>
    </location>
    <ligand>
        <name>AMP</name>
        <dbReference type="ChEBI" id="CHEBI:456215"/>
    </ligand>
</feature>
<feature type="binding site" evidence="4">
    <location>
        <position position="239"/>
    </location>
    <ligand>
        <name>ATP</name>
        <dbReference type="ChEBI" id="CHEBI:30616"/>
    </ligand>
</feature>
<feature type="binding site" evidence="4">
    <location>
        <position position="313"/>
    </location>
    <ligand>
        <name>AMP</name>
        <dbReference type="ChEBI" id="CHEBI:456215"/>
    </ligand>
</feature>
<feature type="binding site" evidence="4">
    <location>
        <position position="313"/>
    </location>
    <ligand>
        <name>ATP</name>
        <dbReference type="ChEBI" id="CHEBI:30616"/>
    </ligand>
</feature>
<feature type="binding site" evidence="2">
    <location>
        <position position="338"/>
    </location>
    <ligand>
        <name>CDP</name>
        <dbReference type="ChEBI" id="CHEBI:58069"/>
    </ligand>
</feature>
<feature type="binding site" evidence="2">
    <location>
        <position position="340"/>
    </location>
    <ligand>
        <name>CDP</name>
        <dbReference type="ChEBI" id="CHEBI:58069"/>
    </ligand>
</feature>
<feature type="binding site" evidence="2">
    <location>
        <position position="343"/>
    </location>
    <ligand>
        <name>ADP</name>
        <dbReference type="ChEBI" id="CHEBI:456216"/>
    </ligand>
</feature>
<feature type="binding site" evidence="2">
    <location>
        <position position="343"/>
    </location>
    <ligand>
        <name>CDP</name>
        <dbReference type="ChEBI" id="CHEBI:58069"/>
    </ligand>
</feature>
<feature type="binding site" evidence="4">
    <location>
        <position position="344"/>
    </location>
    <ligand>
        <name>AMP</name>
        <dbReference type="ChEBI" id="CHEBI:456215"/>
    </ligand>
</feature>
<feature type="binding site" evidence="4">
    <location>
        <position position="344"/>
    </location>
    <ligand>
        <name>ATP</name>
        <dbReference type="ChEBI" id="CHEBI:30616"/>
    </ligand>
</feature>
<feature type="binding site" evidence="4">
    <location>
        <position position="375"/>
    </location>
    <ligand>
        <name>ATP</name>
        <dbReference type="ChEBI" id="CHEBI:30616"/>
    </ligand>
</feature>
<feature type="binding site" evidence="4">
    <location>
        <position position="375"/>
    </location>
    <ligand>
        <name>Mg(2+)</name>
        <dbReference type="ChEBI" id="CHEBI:18420"/>
    </ligand>
</feature>
<feature type="binding site" evidence="4">
    <location>
        <position position="376"/>
    </location>
    <ligand>
        <name>ATP</name>
        <dbReference type="ChEBI" id="CHEBI:30616"/>
    </ligand>
</feature>
<feature type="modified residue" description="N-acetylserine" evidence="2">
    <location>
        <position position="2"/>
    </location>
</feature>
<feature type="modified residue" description="Phosphoserine" evidence="2">
    <location>
        <position position="2"/>
    </location>
</feature>
<feature type="modified residue" description="Phosphoserine" evidence="2">
    <location>
        <position position="4"/>
    </location>
</feature>
<feature type="modified residue" description="N6-succinyllysine" evidence="3">
    <location>
        <position position="6"/>
    </location>
</feature>
<feature type="modified residue" description="N6-acetyllysine" evidence="2">
    <location>
        <position position="11"/>
    </location>
</feature>
<feature type="modified residue" description="N6-acetyllysine" evidence="2">
    <location>
        <position position="75"/>
    </location>
</feature>
<feature type="modified residue" description="Phosphotyrosine" evidence="3">
    <location>
        <position position="76"/>
    </location>
</feature>
<feature type="modified residue" description="N6-acetyllysine" evidence="2">
    <location>
        <position position="86"/>
    </location>
</feature>
<feature type="modified residue" description="N6-acetyllysine" evidence="3">
    <location>
        <position position="91"/>
    </location>
</feature>
<feature type="modified residue" description="N6-(2-hydroxyisobutyryl)lysine; alternate" evidence="2">
    <location>
        <position position="97"/>
    </location>
</feature>
<feature type="modified residue" description="N6-acetyllysine; alternate" evidence="2">
    <location>
        <position position="97"/>
    </location>
</feature>
<feature type="modified residue" description="N6-acetyllysine; alternate" evidence="2">
    <location>
        <position position="131"/>
    </location>
</feature>
<feature type="modified residue" description="N6-malonyllysine; alternate" evidence="1">
    <location>
        <position position="131"/>
    </location>
</feature>
<feature type="modified residue" description="N6-acetyllysine" evidence="2">
    <location>
        <position position="146"/>
    </location>
</feature>
<feature type="modified residue" description="N6-succinyllysine" evidence="3">
    <location>
        <position position="191"/>
    </location>
</feature>
<feature type="modified residue" description="Phosphotyrosine" evidence="2">
    <location>
        <position position="196"/>
    </location>
</feature>
<feature type="modified residue" description="N6-acetyllysine" evidence="2">
    <location>
        <position position="199"/>
    </location>
</feature>
<feature type="modified residue" description="Phosphoserine" evidence="2">
    <location>
        <position position="203"/>
    </location>
</feature>
<feature type="modified residue" description="N6-(2-hydroxyisobutyryl)lysine" evidence="2">
    <location>
        <position position="216"/>
    </location>
</feature>
<feature type="modified residue" description="N6-(2-hydroxyisobutyryl)lysine" evidence="2">
    <location>
        <position position="220"/>
    </location>
</feature>
<feature type="modified residue" description="N6-acetyllysine" evidence="2">
    <location>
        <position position="267"/>
    </location>
</feature>
<feature type="modified residue" description="N6-acetyllysine" evidence="2">
    <location>
        <position position="291"/>
    </location>
</feature>
<feature type="modified residue" description="N6-(2-hydroxyisobutyryl)lysine" evidence="2">
    <location>
        <position position="323"/>
    </location>
</feature>
<keyword id="KW-0007">Acetylation</keyword>
<keyword id="KW-0067">ATP-binding</keyword>
<keyword id="KW-0963">Cytoplasm</keyword>
<keyword id="KW-0324">Glycolysis</keyword>
<keyword id="KW-0379">Hydroxylation</keyword>
<keyword id="KW-0418">Kinase</keyword>
<keyword id="KW-0460">Magnesium</keyword>
<keyword id="KW-0479">Metal-binding</keyword>
<keyword id="KW-0496">Mitochondrion</keyword>
<keyword id="KW-0547">Nucleotide-binding</keyword>
<keyword id="KW-0597">Phosphoprotein</keyword>
<keyword id="KW-0808">Transferase</keyword>